<dbReference type="EMBL" id="AL935145">
    <property type="protein sequence ID" value="CAH68889.1"/>
    <property type="molecule type" value="Genomic_DNA"/>
</dbReference>
<dbReference type="EMBL" id="BC044434">
    <property type="protein sequence ID" value="AAH44434.1"/>
    <property type="molecule type" value="mRNA"/>
</dbReference>
<dbReference type="EMBL" id="BC045298">
    <property type="protein sequence ID" value="AAH45298.1"/>
    <property type="molecule type" value="mRNA"/>
</dbReference>
<dbReference type="EMBL" id="BC053150">
    <property type="protein sequence ID" value="AAH53150.1"/>
    <property type="molecule type" value="mRNA"/>
</dbReference>
<dbReference type="EMBL" id="BC054600">
    <property type="protein sequence ID" value="AAH54600.1"/>
    <property type="molecule type" value="mRNA"/>
</dbReference>
<dbReference type="EMBL" id="BC059427">
    <property type="protein sequence ID" value="AAH59427.1"/>
    <property type="molecule type" value="mRNA"/>
</dbReference>
<dbReference type="EMBL" id="BC059500">
    <property type="protein sequence ID" value="AAH59500.1"/>
    <property type="molecule type" value="mRNA"/>
</dbReference>
<dbReference type="EMBL" id="BC065426">
    <property type="protein sequence ID" value="AAH65426.1"/>
    <property type="molecule type" value="mRNA"/>
</dbReference>
<dbReference type="EMBL" id="BC066752">
    <property type="protein sequence ID" value="AAH66752.1"/>
    <property type="molecule type" value="mRNA"/>
</dbReference>
<dbReference type="EMBL" id="BC068339">
    <property type="protein sequence ID" value="AAH68339.1"/>
    <property type="molecule type" value="mRNA"/>
</dbReference>
<dbReference type="EMBL" id="BC071404">
    <property type="protein sequence ID" value="AAH71404.1"/>
    <property type="molecule type" value="mRNA"/>
</dbReference>
<dbReference type="EMBL" id="BC097062">
    <property type="protein sequence ID" value="AAH97062.1"/>
    <property type="molecule type" value="mRNA"/>
</dbReference>
<dbReference type="RefSeq" id="NP_892012.1">
    <property type="nucleotide sequence ID" value="NM_182967.1"/>
</dbReference>
<dbReference type="RefSeq" id="NP_955864.1">
    <property type="nucleotide sequence ID" value="NM_199570.1"/>
</dbReference>
<dbReference type="RefSeq" id="NP_956290.1">
    <property type="nucleotide sequence ID" value="NM_199996.2"/>
</dbReference>
<dbReference type="RefSeq" id="NP_956376.1">
    <property type="nucleotide sequence ID" value="NM_200082.1"/>
</dbReference>
<dbReference type="RefSeq" id="NP_998516.1">
    <property type="nucleotide sequence ID" value="NM_213351.1"/>
</dbReference>
<dbReference type="RefSeq" id="NP_999901.1">
    <property type="nucleotide sequence ID" value="NM_214736.1"/>
</dbReference>
<dbReference type="SMR" id="Q6PI52"/>
<dbReference type="FunCoup" id="Q6PI52">
    <property type="interactions" value="3206"/>
</dbReference>
<dbReference type="STRING" id="7955.ENSDARP00000010393"/>
<dbReference type="PaxDb" id="7955-ENSDARP00000010393"/>
<dbReference type="Ensembl" id="ENSDART00000014868">
    <property type="protein sequence ID" value="ENSDARP00000018820"/>
    <property type="gene ID" value="ENSDARG00000015050"/>
</dbReference>
<dbReference type="Ensembl" id="ENSDART00000021083">
    <property type="protein sequence ID" value="ENSDARP00000010393"/>
    <property type="gene ID" value="ENSDARG00000031427"/>
</dbReference>
<dbReference type="Ensembl" id="ENSDART00000034580">
    <property type="protein sequence ID" value="ENSDARP00000035027"/>
    <property type="gene ID" value="ENSDARG00000021811"/>
</dbReference>
<dbReference type="Ensembl" id="ENSDART00000050308">
    <property type="protein sequence ID" value="ENSDARP00000050307"/>
    <property type="gene ID" value="ENSDARG00000034187"/>
</dbReference>
<dbReference type="Ensembl" id="ENSDART00000065392">
    <property type="protein sequence ID" value="ENSDARP00000065391"/>
    <property type="gene ID" value="ENSDARG00000074057"/>
</dbReference>
<dbReference type="Ensembl" id="ENSDART00000172114">
    <property type="protein sequence ID" value="ENSDARP00000139118"/>
    <property type="gene ID" value="ENSDARG00000100825"/>
</dbReference>
<dbReference type="Ensembl" id="ENSDART00000185357">
    <property type="protein sequence ID" value="ENSDARP00000148382"/>
    <property type="gene ID" value="ENSDARG00000034187"/>
</dbReference>
<dbReference type="Ensembl" id="ENSDART00000186813">
    <property type="protein sequence ID" value="ENSDARP00000156858"/>
    <property type="gene ID" value="ENSDARG00000021811"/>
</dbReference>
<dbReference type="Ensembl" id="ENSDART00000187901">
    <property type="protein sequence ID" value="ENSDARP00000147971"/>
    <property type="gene ID" value="ENSDARG00000100825"/>
</dbReference>
<dbReference type="GeneID" id="192322"/>
<dbReference type="GeneID" id="321808"/>
<dbReference type="GeneID" id="327379"/>
<dbReference type="GeneID" id="336121"/>
<dbReference type="GeneID" id="368217"/>
<dbReference type="GeneID" id="406660"/>
<dbReference type="KEGG" id="dre:192322"/>
<dbReference type="KEGG" id="dre:321808"/>
<dbReference type="KEGG" id="dre:327379"/>
<dbReference type="KEGG" id="dre:336121"/>
<dbReference type="KEGG" id="dre:368217"/>
<dbReference type="KEGG" id="dre:406660"/>
<dbReference type="CTD" id="192322"/>
<dbReference type="CTD" id="321808"/>
<dbReference type="CTD" id="327379"/>
<dbReference type="CTD" id="336121"/>
<dbReference type="CTD" id="368217"/>
<dbReference type="CTD" id="406660"/>
<dbReference type="eggNOG" id="KOG0027">
    <property type="taxonomic scope" value="Eukaryota"/>
</dbReference>
<dbReference type="HOGENOM" id="CLU_061288_2_0_1"/>
<dbReference type="InParanoid" id="Q6PI52"/>
<dbReference type="OMA" id="ARKMKEC"/>
<dbReference type="OrthoDB" id="8758523at2759"/>
<dbReference type="PhylomeDB" id="Q6PI52"/>
<dbReference type="TreeFam" id="TF300912"/>
<dbReference type="PRO" id="PR:Q6PI52"/>
<dbReference type="Proteomes" id="UP000000437">
    <property type="component" value="Alternate scaffold 13"/>
</dbReference>
<dbReference type="Proteomes" id="UP000000437">
    <property type="component" value="Chromosome 12"/>
</dbReference>
<dbReference type="Proteomes" id="UP000000437">
    <property type="component" value="Chromosome 13"/>
</dbReference>
<dbReference type="Proteomes" id="UP000000437">
    <property type="component" value="Chromosome 15"/>
</dbReference>
<dbReference type="Proteomes" id="UP000000437">
    <property type="component" value="Chromosome 17"/>
</dbReference>
<dbReference type="Proteomes" id="UP000000437">
    <property type="component" value="Chromosome 20"/>
</dbReference>
<dbReference type="Proteomes" id="UP000000437">
    <property type="component" value="Chromosome 21"/>
</dbReference>
<dbReference type="Bgee" id="ENSDARG00000015050">
    <property type="expression patterns" value="Expressed in brain and 41 other cell types or tissues"/>
</dbReference>
<dbReference type="ExpressionAtlas" id="Q6PI52">
    <property type="expression patterns" value="baseline and differential"/>
</dbReference>
<dbReference type="GO" id="GO:0005813">
    <property type="term" value="C:centrosome"/>
    <property type="evidence" value="ECO:0000318"/>
    <property type="project" value="GO_Central"/>
</dbReference>
<dbReference type="GO" id="GO:0005737">
    <property type="term" value="C:cytoplasm"/>
    <property type="evidence" value="ECO:0000318"/>
    <property type="project" value="GO_Central"/>
</dbReference>
<dbReference type="GO" id="GO:0043209">
    <property type="term" value="C:myelin sheath"/>
    <property type="evidence" value="ECO:0000318"/>
    <property type="project" value="GO_Central"/>
</dbReference>
<dbReference type="GO" id="GO:0005509">
    <property type="term" value="F:calcium ion binding"/>
    <property type="evidence" value="ECO:0000318"/>
    <property type="project" value="GO_Central"/>
</dbReference>
<dbReference type="CDD" id="cd00051">
    <property type="entry name" value="EFh"/>
    <property type="match status" value="2"/>
</dbReference>
<dbReference type="FunFam" id="1.10.238.10:FF:000527">
    <property type="entry name" value="Calmodulin-3"/>
    <property type="match status" value="1"/>
</dbReference>
<dbReference type="Gene3D" id="1.10.238.10">
    <property type="entry name" value="EF-hand"/>
    <property type="match status" value="3"/>
</dbReference>
<dbReference type="InterPro" id="IPR050230">
    <property type="entry name" value="CALM/Myosin/TropC-like"/>
</dbReference>
<dbReference type="InterPro" id="IPR011992">
    <property type="entry name" value="EF-hand-dom_pair"/>
</dbReference>
<dbReference type="InterPro" id="IPR018247">
    <property type="entry name" value="EF_Hand_1_Ca_BS"/>
</dbReference>
<dbReference type="InterPro" id="IPR002048">
    <property type="entry name" value="EF_hand_dom"/>
</dbReference>
<dbReference type="PANTHER" id="PTHR23048:SF0">
    <property type="entry name" value="CALMODULIN LIKE 3"/>
    <property type="match status" value="1"/>
</dbReference>
<dbReference type="PANTHER" id="PTHR23048">
    <property type="entry name" value="MYOSIN LIGHT CHAIN 1, 3"/>
    <property type="match status" value="1"/>
</dbReference>
<dbReference type="Pfam" id="PF13499">
    <property type="entry name" value="EF-hand_7"/>
    <property type="match status" value="2"/>
</dbReference>
<dbReference type="PRINTS" id="PR00450">
    <property type="entry name" value="RECOVERIN"/>
</dbReference>
<dbReference type="SMART" id="SM00054">
    <property type="entry name" value="EFh"/>
    <property type="match status" value="4"/>
</dbReference>
<dbReference type="SUPFAM" id="SSF47473">
    <property type="entry name" value="EF-hand"/>
    <property type="match status" value="1"/>
</dbReference>
<dbReference type="PROSITE" id="PS00018">
    <property type="entry name" value="EF_HAND_1"/>
    <property type="match status" value="4"/>
</dbReference>
<dbReference type="PROSITE" id="PS50222">
    <property type="entry name" value="EF_HAND_2"/>
    <property type="match status" value="4"/>
</dbReference>
<organism>
    <name type="scientific">Danio rerio</name>
    <name type="common">Zebrafish</name>
    <name type="synonym">Brachydanio rerio</name>
    <dbReference type="NCBI Taxonomy" id="7955"/>
    <lineage>
        <taxon>Eukaryota</taxon>
        <taxon>Metazoa</taxon>
        <taxon>Chordata</taxon>
        <taxon>Craniata</taxon>
        <taxon>Vertebrata</taxon>
        <taxon>Euteleostomi</taxon>
        <taxon>Actinopterygii</taxon>
        <taxon>Neopterygii</taxon>
        <taxon>Teleostei</taxon>
        <taxon>Ostariophysi</taxon>
        <taxon>Cypriniformes</taxon>
        <taxon>Danionidae</taxon>
        <taxon>Danioninae</taxon>
        <taxon>Danio</taxon>
    </lineage>
</organism>
<sequence length="149" mass="16838">MADQLTEEQIAEFKEAFSLFDKDGDGTITTKELGTVMRSLGQNPTEAELQDMINEVDADGNGTIDFPEFLTMMARKMKDTDSEEEIREAFRVFDKDGNGYISAAELRHVMTNLGEKLTDEEVDEMIREADIDGDGQVNYEEFVQMMTAK</sequence>
<gene>
    <name type="primary">calm1a</name>
    <name type="ORF">zgc:63926</name>
</gene>
<gene>
    <name type="primary">calm1b</name>
</gene>
<gene>
    <name type="primary">calm2a</name>
    <name type="synonym">calm2d</name>
</gene>
<gene>
    <name type="primary">calm2b</name>
    <name type="ORF">zgc:64036</name>
</gene>
<gene>
    <name type="primary">calm3a</name>
    <name type="synonym">calm2g</name>
    <name type="ORF">zgc:86728</name>
</gene>
<gene>
    <name type="primary">calm3b</name>
    <name type="ORF">zgc:76987</name>
</gene>
<proteinExistence type="evidence at transcript level"/>
<name>CALM_DANRE</name>
<reference key="1">
    <citation type="journal article" date="2013" name="Nature">
        <title>The zebrafish reference genome sequence and its relationship to the human genome.</title>
        <authorList>
            <person name="Howe K."/>
            <person name="Clark M.D."/>
            <person name="Torroja C.F."/>
            <person name="Torrance J."/>
            <person name="Berthelot C."/>
            <person name="Muffato M."/>
            <person name="Collins J.E."/>
            <person name="Humphray S."/>
            <person name="McLaren K."/>
            <person name="Matthews L."/>
            <person name="McLaren S."/>
            <person name="Sealy I."/>
            <person name="Caccamo M."/>
            <person name="Churcher C."/>
            <person name="Scott C."/>
            <person name="Barrett J.C."/>
            <person name="Koch R."/>
            <person name="Rauch G.J."/>
            <person name="White S."/>
            <person name="Chow W."/>
            <person name="Kilian B."/>
            <person name="Quintais L.T."/>
            <person name="Guerra-Assuncao J.A."/>
            <person name="Zhou Y."/>
            <person name="Gu Y."/>
            <person name="Yen J."/>
            <person name="Vogel J.H."/>
            <person name="Eyre T."/>
            <person name="Redmond S."/>
            <person name="Banerjee R."/>
            <person name="Chi J."/>
            <person name="Fu B."/>
            <person name="Langley E."/>
            <person name="Maguire S.F."/>
            <person name="Laird G.K."/>
            <person name="Lloyd D."/>
            <person name="Kenyon E."/>
            <person name="Donaldson S."/>
            <person name="Sehra H."/>
            <person name="Almeida-King J."/>
            <person name="Loveland J."/>
            <person name="Trevanion S."/>
            <person name="Jones M."/>
            <person name="Quail M."/>
            <person name="Willey D."/>
            <person name="Hunt A."/>
            <person name="Burton J."/>
            <person name="Sims S."/>
            <person name="McLay K."/>
            <person name="Plumb B."/>
            <person name="Davis J."/>
            <person name="Clee C."/>
            <person name="Oliver K."/>
            <person name="Clark R."/>
            <person name="Riddle C."/>
            <person name="Elliot D."/>
            <person name="Threadgold G."/>
            <person name="Harden G."/>
            <person name="Ware D."/>
            <person name="Begum S."/>
            <person name="Mortimore B."/>
            <person name="Kerry G."/>
            <person name="Heath P."/>
            <person name="Phillimore B."/>
            <person name="Tracey A."/>
            <person name="Corby N."/>
            <person name="Dunn M."/>
            <person name="Johnson C."/>
            <person name="Wood J."/>
            <person name="Clark S."/>
            <person name="Pelan S."/>
            <person name="Griffiths G."/>
            <person name="Smith M."/>
            <person name="Glithero R."/>
            <person name="Howden P."/>
            <person name="Barker N."/>
            <person name="Lloyd C."/>
            <person name="Stevens C."/>
            <person name="Harley J."/>
            <person name="Holt K."/>
            <person name="Panagiotidis G."/>
            <person name="Lovell J."/>
            <person name="Beasley H."/>
            <person name="Henderson C."/>
            <person name="Gordon D."/>
            <person name="Auger K."/>
            <person name="Wright D."/>
            <person name="Collins J."/>
            <person name="Raisen C."/>
            <person name="Dyer L."/>
            <person name="Leung K."/>
            <person name="Robertson L."/>
            <person name="Ambridge K."/>
            <person name="Leongamornlert D."/>
            <person name="McGuire S."/>
            <person name="Gilderthorp R."/>
            <person name="Griffiths C."/>
            <person name="Manthravadi D."/>
            <person name="Nichol S."/>
            <person name="Barker G."/>
            <person name="Whitehead S."/>
            <person name="Kay M."/>
            <person name="Brown J."/>
            <person name="Murnane C."/>
            <person name="Gray E."/>
            <person name="Humphries M."/>
            <person name="Sycamore N."/>
            <person name="Barker D."/>
            <person name="Saunders D."/>
            <person name="Wallis J."/>
            <person name="Babbage A."/>
            <person name="Hammond S."/>
            <person name="Mashreghi-Mohammadi M."/>
            <person name="Barr L."/>
            <person name="Martin S."/>
            <person name="Wray P."/>
            <person name="Ellington A."/>
            <person name="Matthews N."/>
            <person name="Ellwood M."/>
            <person name="Woodmansey R."/>
            <person name="Clark G."/>
            <person name="Cooper J."/>
            <person name="Tromans A."/>
            <person name="Grafham D."/>
            <person name="Skuce C."/>
            <person name="Pandian R."/>
            <person name="Andrews R."/>
            <person name="Harrison E."/>
            <person name="Kimberley A."/>
            <person name="Garnett J."/>
            <person name="Fosker N."/>
            <person name="Hall R."/>
            <person name="Garner P."/>
            <person name="Kelly D."/>
            <person name="Bird C."/>
            <person name="Palmer S."/>
            <person name="Gehring I."/>
            <person name="Berger A."/>
            <person name="Dooley C.M."/>
            <person name="Ersan-Urun Z."/>
            <person name="Eser C."/>
            <person name="Geiger H."/>
            <person name="Geisler M."/>
            <person name="Karotki L."/>
            <person name="Kirn A."/>
            <person name="Konantz J."/>
            <person name="Konantz M."/>
            <person name="Oberlander M."/>
            <person name="Rudolph-Geiger S."/>
            <person name="Teucke M."/>
            <person name="Lanz C."/>
            <person name="Raddatz G."/>
            <person name="Osoegawa K."/>
            <person name="Zhu B."/>
            <person name="Rapp A."/>
            <person name="Widaa S."/>
            <person name="Langford C."/>
            <person name="Yang F."/>
            <person name="Schuster S.C."/>
            <person name="Carter N.P."/>
            <person name="Harrow J."/>
            <person name="Ning Z."/>
            <person name="Herrero J."/>
            <person name="Searle S.M."/>
            <person name="Enright A."/>
            <person name="Geisler R."/>
            <person name="Plasterk R.H."/>
            <person name="Lee C."/>
            <person name="Westerfield M."/>
            <person name="de Jong P.J."/>
            <person name="Zon L.I."/>
            <person name="Postlethwait J.H."/>
            <person name="Nusslein-Volhard C."/>
            <person name="Hubbard T.J."/>
            <person name="Roest Crollius H."/>
            <person name="Rogers J."/>
            <person name="Stemple D.L."/>
        </authorList>
    </citation>
    <scope>NUCLEOTIDE SEQUENCE [LARGE SCALE GENOMIC DNA] (CALM1B)</scope>
    <source>
        <strain>Tuebingen</strain>
    </source>
</reference>
<reference key="2">
    <citation type="submission" date="2005-06" db="EMBL/GenBank/DDBJ databases">
        <authorList>
            <consortium name="NIH - Zebrafish Gene Collection (ZGC) project"/>
        </authorList>
    </citation>
    <scope>NUCLEOTIDE SEQUENCE [LARGE SCALE MRNA] (CALM1A; CALM1B; CALM2A; CALM2B; CALM3A; CALM3B)</scope>
    <source>
        <strain>AB</strain>
        <tissue>Embryo</tissue>
        <tissue>Eye</tissue>
        <tissue>Kidney</tissue>
        <tissue>Retina</tissue>
    </source>
</reference>
<protein>
    <recommendedName>
        <fullName>Calmodulin</fullName>
        <shortName>CaM</shortName>
    </recommendedName>
</protein>
<accession>Q6PI52</accession>
<accession>Q4V949</accession>
<comment type="function">
    <text evidence="1">Calmodulin acts as part of a calcium signal transduction pathway by mediating the control of a large number of enzymes, ion channels, aquaporins and other proteins through calcium-binding. Calcium-binding is required for the activation of calmodulin. Among the enzymes to be stimulated by the calmodulin-calcium complex are a number of protein kinases, such as myosin light-chain kinases and calmodulin-dependent protein kinase type II (CaMK2), and phosphatases.</text>
</comment>
<comment type="miscellaneous">
    <text>This protein has four functional calcium-binding sites.</text>
</comment>
<comment type="similarity">
    <text evidence="3">Belongs to the calmodulin family.</text>
</comment>
<evidence type="ECO:0000250" key="1">
    <source>
        <dbReference type="UniProtKB" id="P0DP23"/>
    </source>
</evidence>
<evidence type="ECO:0000255" key="2">
    <source>
        <dbReference type="PROSITE-ProRule" id="PRU00448"/>
    </source>
</evidence>
<evidence type="ECO:0000305" key="3"/>
<keyword id="KW-0007">Acetylation</keyword>
<keyword id="KW-0106">Calcium</keyword>
<keyword id="KW-0479">Metal-binding</keyword>
<keyword id="KW-0488">Methylation</keyword>
<keyword id="KW-1185">Reference proteome</keyword>
<keyword id="KW-0677">Repeat</keyword>
<feature type="initiator methionine" description="Removed" evidence="1">
    <location>
        <position position="1"/>
    </location>
</feature>
<feature type="chain" id="PRO_0000198231" description="Calmodulin">
    <location>
        <begin position="2"/>
        <end position="149"/>
    </location>
</feature>
<feature type="domain" description="EF-hand 1" evidence="2">
    <location>
        <begin position="8"/>
        <end position="43"/>
    </location>
</feature>
<feature type="domain" description="EF-hand 2" evidence="2">
    <location>
        <begin position="44"/>
        <end position="79"/>
    </location>
</feature>
<feature type="domain" description="EF-hand 3" evidence="2">
    <location>
        <begin position="81"/>
        <end position="116"/>
    </location>
</feature>
<feature type="domain" description="EF-hand 4" evidence="2">
    <location>
        <begin position="117"/>
        <end position="149"/>
    </location>
</feature>
<feature type="binding site" evidence="2">
    <location>
        <position position="21"/>
    </location>
    <ligand>
        <name>Ca(2+)</name>
        <dbReference type="ChEBI" id="CHEBI:29108"/>
        <label>1</label>
    </ligand>
</feature>
<feature type="binding site" evidence="2">
    <location>
        <position position="23"/>
    </location>
    <ligand>
        <name>Ca(2+)</name>
        <dbReference type="ChEBI" id="CHEBI:29108"/>
        <label>1</label>
    </ligand>
</feature>
<feature type="binding site" evidence="2">
    <location>
        <position position="25"/>
    </location>
    <ligand>
        <name>Ca(2+)</name>
        <dbReference type="ChEBI" id="CHEBI:29108"/>
        <label>1</label>
    </ligand>
</feature>
<feature type="binding site" evidence="2">
    <location>
        <position position="27"/>
    </location>
    <ligand>
        <name>Ca(2+)</name>
        <dbReference type="ChEBI" id="CHEBI:29108"/>
        <label>1</label>
    </ligand>
</feature>
<feature type="binding site" evidence="2">
    <location>
        <position position="32"/>
    </location>
    <ligand>
        <name>Ca(2+)</name>
        <dbReference type="ChEBI" id="CHEBI:29108"/>
        <label>1</label>
    </ligand>
</feature>
<feature type="binding site" evidence="2">
    <location>
        <position position="57"/>
    </location>
    <ligand>
        <name>Ca(2+)</name>
        <dbReference type="ChEBI" id="CHEBI:29108"/>
        <label>2</label>
    </ligand>
</feature>
<feature type="binding site" evidence="2">
    <location>
        <position position="59"/>
    </location>
    <ligand>
        <name>Ca(2+)</name>
        <dbReference type="ChEBI" id="CHEBI:29108"/>
        <label>2</label>
    </ligand>
</feature>
<feature type="binding site" evidence="2">
    <location>
        <position position="61"/>
    </location>
    <ligand>
        <name>Ca(2+)</name>
        <dbReference type="ChEBI" id="CHEBI:29108"/>
        <label>2</label>
    </ligand>
</feature>
<feature type="binding site" evidence="2">
    <location>
        <position position="63"/>
    </location>
    <ligand>
        <name>Ca(2+)</name>
        <dbReference type="ChEBI" id="CHEBI:29108"/>
        <label>2</label>
    </ligand>
</feature>
<feature type="binding site" evidence="2">
    <location>
        <position position="68"/>
    </location>
    <ligand>
        <name>Ca(2+)</name>
        <dbReference type="ChEBI" id="CHEBI:29108"/>
        <label>2</label>
    </ligand>
</feature>
<feature type="binding site" evidence="2">
    <location>
        <position position="94"/>
    </location>
    <ligand>
        <name>Ca(2+)</name>
        <dbReference type="ChEBI" id="CHEBI:29108"/>
        <label>3</label>
    </ligand>
</feature>
<feature type="binding site" evidence="2">
    <location>
        <position position="96"/>
    </location>
    <ligand>
        <name>Ca(2+)</name>
        <dbReference type="ChEBI" id="CHEBI:29108"/>
        <label>3</label>
    </ligand>
</feature>
<feature type="binding site" evidence="2">
    <location>
        <position position="98"/>
    </location>
    <ligand>
        <name>Ca(2+)</name>
        <dbReference type="ChEBI" id="CHEBI:29108"/>
        <label>3</label>
    </ligand>
</feature>
<feature type="binding site" evidence="2">
    <location>
        <position position="100"/>
    </location>
    <ligand>
        <name>Ca(2+)</name>
        <dbReference type="ChEBI" id="CHEBI:29108"/>
        <label>3</label>
    </ligand>
</feature>
<feature type="binding site" evidence="2">
    <location>
        <position position="105"/>
    </location>
    <ligand>
        <name>Ca(2+)</name>
        <dbReference type="ChEBI" id="CHEBI:29108"/>
        <label>3</label>
    </ligand>
</feature>
<feature type="binding site" evidence="2">
    <location>
        <position position="130"/>
    </location>
    <ligand>
        <name>Ca(2+)</name>
        <dbReference type="ChEBI" id="CHEBI:29108"/>
        <label>4</label>
    </ligand>
</feature>
<feature type="binding site" evidence="2">
    <location>
        <position position="132"/>
    </location>
    <ligand>
        <name>Ca(2+)</name>
        <dbReference type="ChEBI" id="CHEBI:29108"/>
        <label>4</label>
    </ligand>
</feature>
<feature type="binding site" evidence="2">
    <location>
        <position position="134"/>
    </location>
    <ligand>
        <name>Ca(2+)</name>
        <dbReference type="ChEBI" id="CHEBI:29108"/>
        <label>4</label>
    </ligand>
</feature>
<feature type="binding site" evidence="2">
    <location>
        <position position="136"/>
    </location>
    <ligand>
        <name>Ca(2+)</name>
        <dbReference type="ChEBI" id="CHEBI:29108"/>
        <label>4</label>
    </ligand>
</feature>
<feature type="binding site" evidence="2">
    <location>
        <position position="141"/>
    </location>
    <ligand>
        <name>Ca(2+)</name>
        <dbReference type="ChEBI" id="CHEBI:29108"/>
        <label>4</label>
    </ligand>
</feature>
<feature type="modified residue" description="N-acetylalanine" evidence="1">
    <location>
        <position position="2"/>
    </location>
</feature>
<feature type="modified residue" description="N6,N6,N6-trimethyllysine" evidence="1">
    <location>
        <position position="116"/>
    </location>
</feature>